<proteinExistence type="evidence at transcript level"/>
<comment type="function">
    <text evidence="2 3">Homodimeric cytokine expressed predominantly by T-lymphocytes and NK cells that plays an important role in the survival, differentiation, and chemotaxis of eosinophils. Also acts on activated and resting B-cells to induce immunoglobulin production, growth, and differentiation (By similarity). Mechanistically, exerts its biological effects through a receptor composed of IL5RA subunit and the cytokine receptor common subunit beta/CSF2RB. Binding to the receptor leads to activation of various kinases including LYN, SYK and JAK2 and thereby propagates signals through the RAS-MAPK and JAK-STAT5 pathways respectively (By similarity).</text>
</comment>
<comment type="subunit">
    <text evidence="2 3">Homodimer; disulfide-linked. Interacts with IL5RA. Interacts with CSF2RB.</text>
</comment>
<comment type="subcellular location">
    <subcellularLocation>
        <location evidence="2">Secreted</location>
    </subcellularLocation>
</comment>
<comment type="similarity">
    <text evidence="5">Belongs to the IL-5 family.</text>
</comment>
<organism>
    <name type="scientific">Macaca mulatta</name>
    <name type="common">Rhesus macaque</name>
    <dbReference type="NCBI Taxonomy" id="9544"/>
    <lineage>
        <taxon>Eukaryota</taxon>
        <taxon>Metazoa</taxon>
        <taxon>Chordata</taxon>
        <taxon>Craniata</taxon>
        <taxon>Vertebrata</taxon>
        <taxon>Euteleostomi</taxon>
        <taxon>Mammalia</taxon>
        <taxon>Eutheria</taxon>
        <taxon>Euarchontoglires</taxon>
        <taxon>Primates</taxon>
        <taxon>Haplorrhini</taxon>
        <taxon>Catarrhini</taxon>
        <taxon>Cercopithecidae</taxon>
        <taxon>Cercopithecinae</taxon>
        <taxon>Macaca</taxon>
    </lineage>
</organism>
<evidence type="ECO:0000250" key="1"/>
<evidence type="ECO:0000250" key="2">
    <source>
        <dbReference type="UniProtKB" id="P04401"/>
    </source>
</evidence>
<evidence type="ECO:0000250" key="3">
    <source>
        <dbReference type="UniProtKB" id="P05113"/>
    </source>
</evidence>
<evidence type="ECO:0000255" key="4"/>
<evidence type="ECO:0000305" key="5"/>
<keyword id="KW-0202">Cytokine</keyword>
<keyword id="KW-1015">Disulfide bond</keyword>
<keyword id="KW-0325">Glycoprotein</keyword>
<keyword id="KW-0339">Growth factor</keyword>
<keyword id="KW-1185">Reference proteome</keyword>
<keyword id="KW-0964">Secreted</keyword>
<keyword id="KW-0732">Signal</keyword>
<protein>
    <recommendedName>
        <fullName>Interleukin-5</fullName>
        <shortName>IL-5</shortName>
    </recommendedName>
    <alternativeName>
        <fullName>Eosinophil differentiation factor</fullName>
    </alternativeName>
    <alternativeName>
        <fullName>T-cell replacing factor</fullName>
        <shortName>TRF</shortName>
    </alternativeName>
</protein>
<reference key="1">
    <citation type="journal article" date="1995" name="J. Immunol.">
        <title>Comparative sequence analysis of cytokine genes from human and nonhuman primates.</title>
        <authorList>
            <person name="Villinger F.J."/>
            <person name="Brar S.S."/>
            <person name="Mayne A.E."/>
            <person name="Chikkala N."/>
            <person name="Ansari A.A."/>
        </authorList>
    </citation>
    <scope>NUCLEOTIDE SEQUENCE [MRNA]</scope>
    <source>
        <tissue>Blood</tissue>
    </source>
</reference>
<sequence length="134" mass="15150">MRMLLHLSLLALGAAYVYAIPTEIPASALVKETLALLSTHRTLLIANETLRIPVPVHKNHQLCTEEIFQGIGTLESQTVQGGTVERLFKNLSLIKKYIGGQKKKCGEERRRVNQFLDYLQEFLGVMNTEWIIES</sequence>
<gene>
    <name type="primary">IL5</name>
</gene>
<feature type="signal peptide" evidence="1">
    <location>
        <begin position="1"/>
        <end position="19"/>
    </location>
</feature>
<feature type="chain" id="PRO_0000015562" description="Interleukin-5">
    <location>
        <begin position="20"/>
        <end position="134"/>
    </location>
</feature>
<feature type="glycosylation site" description="O-linked (GalNAc...) threonine" evidence="1">
    <location>
        <position position="22"/>
    </location>
</feature>
<feature type="glycosylation site" description="N-linked (GlcNAc...) asparagine" evidence="4">
    <location>
        <position position="47"/>
    </location>
</feature>
<feature type="glycosylation site" description="N-linked (GlcNAc...) asparagine" evidence="4">
    <location>
        <position position="90"/>
    </location>
</feature>
<feature type="disulfide bond" description="Interchain (with C-105)" evidence="1">
    <location>
        <position position="63"/>
    </location>
</feature>
<feature type="disulfide bond" description="Interchain (with C-63)" evidence="1">
    <location>
        <position position="105"/>
    </location>
</feature>
<accession>P48093</accession>
<dbReference type="EMBL" id="U19848">
    <property type="protein sequence ID" value="AAA86710.1"/>
    <property type="molecule type" value="mRNA"/>
</dbReference>
<dbReference type="RefSeq" id="NP_001040598.1">
    <property type="nucleotide sequence ID" value="NM_001047133.1"/>
</dbReference>
<dbReference type="SMR" id="P48093"/>
<dbReference type="FunCoup" id="P48093">
    <property type="interactions" value="679"/>
</dbReference>
<dbReference type="STRING" id="9544.ENSMMUP00000004183"/>
<dbReference type="GlyCosmos" id="P48093">
    <property type="glycosylation" value="3 sites, No reported glycans"/>
</dbReference>
<dbReference type="PaxDb" id="9544-ENSMMUP00000004183"/>
<dbReference type="eggNOG" id="ENOG502RWD8">
    <property type="taxonomic scope" value="Eukaryota"/>
</dbReference>
<dbReference type="InParanoid" id="P48093"/>
<dbReference type="Proteomes" id="UP000006718">
    <property type="component" value="Unassembled WGS sequence"/>
</dbReference>
<dbReference type="GO" id="GO:0005615">
    <property type="term" value="C:extracellular space"/>
    <property type="evidence" value="ECO:0000318"/>
    <property type="project" value="GO_Central"/>
</dbReference>
<dbReference type="GO" id="GO:0005125">
    <property type="term" value="F:cytokine activity"/>
    <property type="evidence" value="ECO:0000318"/>
    <property type="project" value="GO_Central"/>
</dbReference>
<dbReference type="GO" id="GO:0008083">
    <property type="term" value="F:growth factor activity"/>
    <property type="evidence" value="ECO:0007669"/>
    <property type="project" value="UniProtKB-KW"/>
</dbReference>
<dbReference type="GO" id="GO:0005137">
    <property type="term" value="F:interleukin-5 receptor binding"/>
    <property type="evidence" value="ECO:0007669"/>
    <property type="project" value="InterPro"/>
</dbReference>
<dbReference type="GO" id="GO:0006955">
    <property type="term" value="P:immune response"/>
    <property type="evidence" value="ECO:0007669"/>
    <property type="project" value="InterPro"/>
</dbReference>
<dbReference type="GO" id="GO:0038043">
    <property type="term" value="P:interleukin-5-mediated signaling pathway"/>
    <property type="evidence" value="ECO:0000318"/>
    <property type="project" value="GO_Central"/>
</dbReference>
<dbReference type="FunFam" id="1.20.1250.10:FF:000034">
    <property type="entry name" value="Interleukin-5"/>
    <property type="match status" value="1"/>
</dbReference>
<dbReference type="Gene3D" id="1.20.1250.10">
    <property type="match status" value="1"/>
</dbReference>
<dbReference type="InterPro" id="IPR009079">
    <property type="entry name" value="4_helix_cytokine-like_core"/>
</dbReference>
<dbReference type="InterPro" id="IPR000186">
    <property type="entry name" value="IL-5"/>
</dbReference>
<dbReference type="PANTHER" id="PTHR48491">
    <property type="entry name" value="INTERLEUKIN-5"/>
    <property type="match status" value="1"/>
</dbReference>
<dbReference type="PANTHER" id="PTHR48491:SF1">
    <property type="entry name" value="INTERLEUKIN-5"/>
    <property type="match status" value="1"/>
</dbReference>
<dbReference type="Pfam" id="PF02025">
    <property type="entry name" value="IL5"/>
    <property type="match status" value="1"/>
</dbReference>
<dbReference type="PRINTS" id="PR00432">
    <property type="entry name" value="INTERLEUKIN5"/>
</dbReference>
<dbReference type="SUPFAM" id="SSF47266">
    <property type="entry name" value="4-helical cytokines"/>
    <property type="match status" value="1"/>
</dbReference>
<name>IL5_MACMU</name>